<sequence length="385" mass="43204">MVKSYWKKFWGSNVTKSQHFIELNDIAYGNAKKIRVGIDAYRENVIVYRCVNLIAQSAGHVPWKVLKSKSGEVIANHPLNNLLKRPNPEKAGADFFSELISSMLLFGNSYILSTSDFRPKEIYLLPASATEAVLDQNVLVAYKYQSASGDKLYRIDPISKISRVLHLKNYHPTNHHYGLSSLEAASLPIDLHQQSSYWNHSLLQNGARPSGALIVKDSNGYLSDEQFERLQAQLSEKFTGSNNAGKPLLLEGGLGWQEMSINPKDMDFIQSKNSAAREIALAFGVPPQLLGINGDNTYSNMQEARLALWEETLIPLLDKIADNISNWFSYLFNEEITIDFDSDSISALTEKRENLWAKIANANFMTLNEKRAFVGLPKIKDGDSL</sequence>
<comment type="similarity">
    <text evidence="1">Belongs to the phage portal family. HK97 subfamily.</text>
</comment>
<feature type="chain" id="PRO_0000280986" description="Uncharacterized protein RBE_0759">
    <location>
        <begin position="1"/>
        <end position="385"/>
    </location>
</feature>
<accession>Q1RIH4</accession>
<gene>
    <name type="ordered locus">RBE_0759</name>
</gene>
<proteinExistence type="inferred from homology"/>
<reference key="1">
    <citation type="journal article" date="2006" name="PLoS Genet.">
        <title>Genome sequence of Rickettsia bellii illuminates the role of amoebae in gene exchanges between intracellular pathogens.</title>
        <authorList>
            <person name="Ogata H."/>
            <person name="La Scola B."/>
            <person name="Audic S."/>
            <person name="Renesto P."/>
            <person name="Blanc G."/>
            <person name="Robert C."/>
            <person name="Fournier P.-E."/>
            <person name="Claverie J.-M."/>
            <person name="Raoult D."/>
        </authorList>
    </citation>
    <scope>NUCLEOTIDE SEQUENCE [LARGE SCALE GENOMIC DNA]</scope>
    <source>
        <strain>RML369-C</strain>
    </source>
</reference>
<protein>
    <recommendedName>
        <fullName>Uncharacterized protein RBE_0759</fullName>
    </recommendedName>
</protein>
<name>Y759_RICBR</name>
<dbReference type="EMBL" id="CP000087">
    <property type="protein sequence ID" value="ABE04840.1"/>
    <property type="molecule type" value="Genomic_DNA"/>
</dbReference>
<dbReference type="RefSeq" id="WP_011477427.1">
    <property type="nucleotide sequence ID" value="NC_007940.1"/>
</dbReference>
<dbReference type="SMR" id="Q1RIH4"/>
<dbReference type="KEGG" id="rbe:RBE_0759"/>
<dbReference type="eggNOG" id="COG4695">
    <property type="taxonomic scope" value="Bacteria"/>
</dbReference>
<dbReference type="HOGENOM" id="CLU_054516_0_0_5"/>
<dbReference type="OrthoDB" id="9134461at2"/>
<dbReference type="Proteomes" id="UP000001951">
    <property type="component" value="Chromosome"/>
</dbReference>
<dbReference type="InterPro" id="IPR006944">
    <property type="entry name" value="Phage/GTA_portal"/>
</dbReference>
<dbReference type="InterPro" id="IPR006427">
    <property type="entry name" value="Portal_HK97"/>
</dbReference>
<dbReference type="NCBIfam" id="TIGR01537">
    <property type="entry name" value="portal_HK97"/>
    <property type="match status" value="1"/>
</dbReference>
<dbReference type="Pfam" id="PF04860">
    <property type="entry name" value="Phage_portal"/>
    <property type="match status" value="1"/>
</dbReference>
<evidence type="ECO:0000305" key="1"/>
<organism>
    <name type="scientific">Rickettsia bellii (strain RML369-C)</name>
    <dbReference type="NCBI Taxonomy" id="336407"/>
    <lineage>
        <taxon>Bacteria</taxon>
        <taxon>Pseudomonadati</taxon>
        <taxon>Pseudomonadota</taxon>
        <taxon>Alphaproteobacteria</taxon>
        <taxon>Rickettsiales</taxon>
        <taxon>Rickettsiaceae</taxon>
        <taxon>Rickettsieae</taxon>
        <taxon>Rickettsia</taxon>
        <taxon>belli group</taxon>
    </lineage>
</organism>